<protein>
    <recommendedName>
        <fullName evidence="1">3-deoxy-manno-octulosonate cytidylyltransferase</fullName>
        <ecNumber evidence="1">2.7.7.38</ecNumber>
    </recommendedName>
    <alternativeName>
        <fullName evidence="1">CMP-2-keto-3-deoxyoctulosonic acid synthase</fullName>
        <shortName evidence="1">CKS</shortName>
        <shortName evidence="1">CMP-KDO synthase</shortName>
    </alternativeName>
</protein>
<dbReference type="EC" id="2.7.7.38" evidence="1"/>
<dbReference type="EMBL" id="CP000708">
    <property type="protein sequence ID" value="ABQ60463.1"/>
    <property type="status" value="ALT_INIT"/>
    <property type="molecule type" value="Genomic_DNA"/>
</dbReference>
<dbReference type="RefSeq" id="WP_005977566.1">
    <property type="nucleotide sequence ID" value="NC_009505.1"/>
</dbReference>
<dbReference type="SMR" id="A5VMY8"/>
<dbReference type="GeneID" id="45123542"/>
<dbReference type="KEGG" id="bov:BOV_0038"/>
<dbReference type="HOGENOM" id="CLU_065038_0_0_5"/>
<dbReference type="PhylomeDB" id="A5VMY8"/>
<dbReference type="UniPathway" id="UPA00030"/>
<dbReference type="UniPathway" id="UPA00358">
    <property type="reaction ID" value="UER00476"/>
</dbReference>
<dbReference type="Proteomes" id="UP000006383">
    <property type="component" value="Chromosome I"/>
</dbReference>
<dbReference type="GO" id="GO:0005829">
    <property type="term" value="C:cytosol"/>
    <property type="evidence" value="ECO:0007669"/>
    <property type="project" value="TreeGrafter"/>
</dbReference>
<dbReference type="GO" id="GO:0008690">
    <property type="term" value="F:3-deoxy-manno-octulosonate cytidylyltransferase activity"/>
    <property type="evidence" value="ECO:0007669"/>
    <property type="project" value="UniProtKB-UniRule"/>
</dbReference>
<dbReference type="GO" id="GO:0033468">
    <property type="term" value="P:CMP-keto-3-deoxy-D-manno-octulosonic acid biosynthetic process"/>
    <property type="evidence" value="ECO:0007669"/>
    <property type="project" value="UniProtKB-UniRule"/>
</dbReference>
<dbReference type="GO" id="GO:0009103">
    <property type="term" value="P:lipopolysaccharide biosynthetic process"/>
    <property type="evidence" value="ECO:0007669"/>
    <property type="project" value="UniProtKB-UniRule"/>
</dbReference>
<dbReference type="CDD" id="cd02517">
    <property type="entry name" value="CMP-KDO-Synthetase"/>
    <property type="match status" value="1"/>
</dbReference>
<dbReference type="Gene3D" id="3.90.550.10">
    <property type="entry name" value="Spore Coat Polysaccharide Biosynthesis Protein SpsA, Chain A"/>
    <property type="match status" value="1"/>
</dbReference>
<dbReference type="HAMAP" id="MF_00057">
    <property type="entry name" value="KdsB"/>
    <property type="match status" value="1"/>
</dbReference>
<dbReference type="InterPro" id="IPR003329">
    <property type="entry name" value="Cytidylyl_trans"/>
</dbReference>
<dbReference type="InterPro" id="IPR004528">
    <property type="entry name" value="KdsB"/>
</dbReference>
<dbReference type="InterPro" id="IPR029044">
    <property type="entry name" value="Nucleotide-diphossugar_trans"/>
</dbReference>
<dbReference type="NCBIfam" id="TIGR00466">
    <property type="entry name" value="kdsB"/>
    <property type="match status" value="1"/>
</dbReference>
<dbReference type="NCBIfam" id="NF003948">
    <property type="entry name" value="PRK05450.1-1"/>
    <property type="match status" value="1"/>
</dbReference>
<dbReference type="NCBIfam" id="NF003952">
    <property type="entry name" value="PRK05450.1-5"/>
    <property type="match status" value="1"/>
</dbReference>
<dbReference type="PANTHER" id="PTHR42866">
    <property type="entry name" value="3-DEOXY-MANNO-OCTULOSONATE CYTIDYLYLTRANSFERASE"/>
    <property type="match status" value="1"/>
</dbReference>
<dbReference type="PANTHER" id="PTHR42866:SF2">
    <property type="entry name" value="3-DEOXY-MANNO-OCTULOSONATE CYTIDYLYLTRANSFERASE, MITOCHONDRIAL"/>
    <property type="match status" value="1"/>
</dbReference>
<dbReference type="Pfam" id="PF02348">
    <property type="entry name" value="CTP_transf_3"/>
    <property type="match status" value="1"/>
</dbReference>
<dbReference type="SUPFAM" id="SSF53448">
    <property type="entry name" value="Nucleotide-diphospho-sugar transferases"/>
    <property type="match status" value="1"/>
</dbReference>
<keyword id="KW-0963">Cytoplasm</keyword>
<keyword id="KW-0448">Lipopolysaccharide biosynthesis</keyword>
<keyword id="KW-0548">Nucleotidyltransferase</keyword>
<keyword id="KW-0808">Transferase</keyword>
<name>KDSB_BRUO2</name>
<sequence length="251" mass="27290">MLQTMKTLTLIPARLGSTRLPNKPLADICGKPMIVHVADRAAAAKLGRTVIATDSEEIFKVVAAHGHEAIMTRGDHESGSDRIYEALAKLDPSGEVDAVVNVQGDLPTIDPDTIRRALLPLEDGPADIATLGVEITVEEEKTNPNVVKIVGSPLAGNRRLRALYFTRATAPYGEGPLYHHIGLYAYRRSALERFVKLGPSPLEKREKLEQLRALEAGMRIDVEIVKTVPLGVDTQADLDRARTFCSQAGTI</sequence>
<comment type="function">
    <text evidence="1">Activates KDO (a required 8-carbon sugar) for incorporation into bacterial lipopolysaccharide in Gram-negative bacteria.</text>
</comment>
<comment type="catalytic activity">
    <reaction evidence="1">
        <text>3-deoxy-alpha-D-manno-oct-2-ulosonate + CTP = CMP-3-deoxy-beta-D-manno-octulosonate + diphosphate</text>
        <dbReference type="Rhea" id="RHEA:23448"/>
        <dbReference type="ChEBI" id="CHEBI:33019"/>
        <dbReference type="ChEBI" id="CHEBI:37563"/>
        <dbReference type="ChEBI" id="CHEBI:85986"/>
        <dbReference type="ChEBI" id="CHEBI:85987"/>
        <dbReference type="EC" id="2.7.7.38"/>
    </reaction>
</comment>
<comment type="pathway">
    <text evidence="1">Nucleotide-sugar biosynthesis; CMP-3-deoxy-D-manno-octulosonate biosynthesis; CMP-3-deoxy-D-manno-octulosonate from 3-deoxy-D-manno-octulosonate and CTP: step 1/1.</text>
</comment>
<comment type="pathway">
    <text evidence="1">Bacterial outer membrane biogenesis; lipopolysaccharide biosynthesis.</text>
</comment>
<comment type="subcellular location">
    <subcellularLocation>
        <location evidence="1">Cytoplasm</location>
    </subcellularLocation>
</comment>
<comment type="similarity">
    <text evidence="1">Belongs to the KdsB family.</text>
</comment>
<comment type="sequence caution" evidence="2">
    <conflict type="erroneous initiation">
        <sequence resource="EMBL-CDS" id="ABQ60463"/>
    </conflict>
</comment>
<gene>
    <name evidence="1" type="primary">kdsB</name>
    <name type="ordered locus">BOV_0038</name>
</gene>
<feature type="chain" id="PRO_0000370016" description="3-deoxy-manno-octulosonate cytidylyltransferase">
    <location>
        <begin position="1"/>
        <end position="251"/>
    </location>
</feature>
<evidence type="ECO:0000255" key="1">
    <source>
        <dbReference type="HAMAP-Rule" id="MF_00057"/>
    </source>
</evidence>
<evidence type="ECO:0000305" key="2"/>
<proteinExistence type="inferred from homology"/>
<reference key="1">
    <citation type="journal article" date="2009" name="PLoS ONE">
        <title>Genome degradation in Brucella ovis corresponds with narrowing of its host range and tissue tropism.</title>
        <authorList>
            <person name="Tsolis R.M."/>
            <person name="Seshadri R."/>
            <person name="Santos R.L."/>
            <person name="Sangari F.J."/>
            <person name="Lobo J.M."/>
            <person name="de Jong M.F."/>
            <person name="Ren Q."/>
            <person name="Myers G."/>
            <person name="Brinkac L.M."/>
            <person name="Nelson W.C."/>
            <person name="Deboy R.T."/>
            <person name="Angiuoli S."/>
            <person name="Khouri H."/>
            <person name="Dimitrov G."/>
            <person name="Robinson J.R."/>
            <person name="Mulligan S."/>
            <person name="Walker R.L."/>
            <person name="Elzer P.E."/>
            <person name="Hassan K.A."/>
            <person name="Paulsen I.T."/>
        </authorList>
    </citation>
    <scope>NUCLEOTIDE SEQUENCE [LARGE SCALE GENOMIC DNA]</scope>
    <source>
        <strain>ATCC 25840 / 63/290 / NCTC 10512</strain>
    </source>
</reference>
<organism>
    <name type="scientific">Brucella ovis (strain ATCC 25840 / 63/290 / NCTC 10512)</name>
    <dbReference type="NCBI Taxonomy" id="444178"/>
    <lineage>
        <taxon>Bacteria</taxon>
        <taxon>Pseudomonadati</taxon>
        <taxon>Pseudomonadota</taxon>
        <taxon>Alphaproteobacteria</taxon>
        <taxon>Hyphomicrobiales</taxon>
        <taxon>Brucellaceae</taxon>
        <taxon>Brucella/Ochrobactrum group</taxon>
        <taxon>Brucella</taxon>
    </lineage>
</organism>
<accession>A5VMY8</accession>